<feature type="chain" id="PRO_0000154607" description="Large ribosomal subunit protein uL10">
    <location>
        <begin position="1"/>
        <end position="159"/>
    </location>
</feature>
<name>RL10_CAMJE</name>
<keyword id="KW-1185">Reference proteome</keyword>
<keyword id="KW-0687">Ribonucleoprotein</keyword>
<keyword id="KW-0689">Ribosomal protein</keyword>
<keyword id="KW-0694">RNA-binding</keyword>
<keyword id="KW-0699">rRNA-binding</keyword>
<reference key="1">
    <citation type="journal article" date="2000" name="Nature">
        <title>The genome sequence of the food-borne pathogen Campylobacter jejuni reveals hypervariable sequences.</title>
        <authorList>
            <person name="Parkhill J."/>
            <person name="Wren B.W."/>
            <person name="Mungall K.L."/>
            <person name="Ketley J.M."/>
            <person name="Churcher C.M."/>
            <person name="Basham D."/>
            <person name="Chillingworth T."/>
            <person name="Davies R.M."/>
            <person name="Feltwell T."/>
            <person name="Holroyd S."/>
            <person name="Jagels K."/>
            <person name="Karlyshev A.V."/>
            <person name="Moule S."/>
            <person name="Pallen M.J."/>
            <person name="Penn C.W."/>
            <person name="Quail M.A."/>
            <person name="Rajandream M.A."/>
            <person name="Rutherford K.M."/>
            <person name="van Vliet A.H.M."/>
            <person name="Whitehead S."/>
            <person name="Barrell B.G."/>
        </authorList>
    </citation>
    <scope>NUCLEOTIDE SEQUENCE [LARGE SCALE GENOMIC DNA]</scope>
    <source>
        <strain>ATCC 700819 / NCTC 11168</strain>
    </source>
</reference>
<dbReference type="EMBL" id="AL111168">
    <property type="protein sequence ID" value="CAL34624.1"/>
    <property type="molecule type" value="Genomic_DNA"/>
</dbReference>
<dbReference type="PIR" id="G81392">
    <property type="entry name" value="G81392"/>
</dbReference>
<dbReference type="RefSeq" id="WP_002858610.1">
    <property type="nucleotide sequence ID" value="NZ_SZUC01000002.1"/>
</dbReference>
<dbReference type="RefSeq" id="YP_002343910.1">
    <property type="nucleotide sequence ID" value="NC_002163.1"/>
</dbReference>
<dbReference type="SMR" id="Q9PI33"/>
<dbReference type="IntAct" id="Q9PI33">
    <property type="interactions" value="9"/>
</dbReference>
<dbReference type="STRING" id="192222.Cj0476"/>
<dbReference type="PaxDb" id="192222-Cj0476"/>
<dbReference type="EnsemblBacteria" id="CAL34624">
    <property type="protein sequence ID" value="CAL34624"/>
    <property type="gene ID" value="Cj0476"/>
</dbReference>
<dbReference type="GeneID" id="904804"/>
<dbReference type="KEGG" id="cje:Cj0476"/>
<dbReference type="PATRIC" id="fig|192222.6.peg.468"/>
<dbReference type="eggNOG" id="COG0244">
    <property type="taxonomic scope" value="Bacteria"/>
</dbReference>
<dbReference type="HOGENOM" id="CLU_092227_2_2_7"/>
<dbReference type="OrthoDB" id="3186107at2"/>
<dbReference type="Proteomes" id="UP000000799">
    <property type="component" value="Chromosome"/>
</dbReference>
<dbReference type="GO" id="GO:0015934">
    <property type="term" value="C:large ribosomal subunit"/>
    <property type="evidence" value="ECO:0007669"/>
    <property type="project" value="InterPro"/>
</dbReference>
<dbReference type="GO" id="GO:0070180">
    <property type="term" value="F:large ribosomal subunit rRNA binding"/>
    <property type="evidence" value="ECO:0007669"/>
    <property type="project" value="UniProtKB-UniRule"/>
</dbReference>
<dbReference type="GO" id="GO:0003735">
    <property type="term" value="F:structural constituent of ribosome"/>
    <property type="evidence" value="ECO:0007669"/>
    <property type="project" value="InterPro"/>
</dbReference>
<dbReference type="GO" id="GO:0006412">
    <property type="term" value="P:translation"/>
    <property type="evidence" value="ECO:0007669"/>
    <property type="project" value="UniProtKB-UniRule"/>
</dbReference>
<dbReference type="CDD" id="cd05797">
    <property type="entry name" value="Ribosomal_L10"/>
    <property type="match status" value="1"/>
</dbReference>
<dbReference type="Gene3D" id="3.30.70.1730">
    <property type="match status" value="1"/>
</dbReference>
<dbReference type="Gene3D" id="6.10.250.290">
    <property type="match status" value="1"/>
</dbReference>
<dbReference type="HAMAP" id="MF_00362">
    <property type="entry name" value="Ribosomal_uL10"/>
    <property type="match status" value="1"/>
</dbReference>
<dbReference type="InterPro" id="IPR001790">
    <property type="entry name" value="Ribosomal_uL10"/>
</dbReference>
<dbReference type="InterPro" id="IPR043141">
    <property type="entry name" value="Ribosomal_uL10-like_sf"/>
</dbReference>
<dbReference type="InterPro" id="IPR022973">
    <property type="entry name" value="Ribosomal_uL10_bac"/>
</dbReference>
<dbReference type="InterPro" id="IPR047865">
    <property type="entry name" value="Ribosomal_uL10_bac_type"/>
</dbReference>
<dbReference type="InterPro" id="IPR002363">
    <property type="entry name" value="Ribosomal_uL10_CS_bac"/>
</dbReference>
<dbReference type="NCBIfam" id="NF000955">
    <property type="entry name" value="PRK00099.1-1"/>
    <property type="match status" value="1"/>
</dbReference>
<dbReference type="PANTHER" id="PTHR11560">
    <property type="entry name" value="39S RIBOSOMAL PROTEIN L10, MITOCHONDRIAL"/>
    <property type="match status" value="1"/>
</dbReference>
<dbReference type="Pfam" id="PF00466">
    <property type="entry name" value="Ribosomal_L10"/>
    <property type="match status" value="1"/>
</dbReference>
<dbReference type="SUPFAM" id="SSF160369">
    <property type="entry name" value="Ribosomal protein L10-like"/>
    <property type="match status" value="1"/>
</dbReference>
<dbReference type="PROSITE" id="PS01109">
    <property type="entry name" value="RIBOSOMAL_L10"/>
    <property type="match status" value="1"/>
</dbReference>
<protein>
    <recommendedName>
        <fullName evidence="2">Large ribosomal subunit protein uL10</fullName>
    </recommendedName>
    <alternativeName>
        <fullName>50S ribosomal protein L10</fullName>
    </alternativeName>
</protein>
<gene>
    <name type="primary">rplJ</name>
    <name type="ordered locus">Cj0476</name>
</gene>
<sequence length="159" mass="17715">MTRSEKVEIIAKLEEGFKASEAIVVCNYRGLSTKKLEELRNNARENNVKVQIVKNTLANIALNNSGKTGLVLKDTNIYLWGEDQLSVSKVAAKFEENNDKFEIKTAHIEGEVADVAKVKALAKMPSRNELLAMLLQVWNAPITNFTIGLNALKNKKESE</sequence>
<proteinExistence type="inferred from homology"/>
<organism>
    <name type="scientific">Campylobacter jejuni subsp. jejuni serotype O:2 (strain ATCC 700819 / NCTC 11168)</name>
    <dbReference type="NCBI Taxonomy" id="192222"/>
    <lineage>
        <taxon>Bacteria</taxon>
        <taxon>Pseudomonadati</taxon>
        <taxon>Campylobacterota</taxon>
        <taxon>Epsilonproteobacteria</taxon>
        <taxon>Campylobacterales</taxon>
        <taxon>Campylobacteraceae</taxon>
        <taxon>Campylobacter</taxon>
    </lineage>
</organism>
<evidence type="ECO:0000250" key="1"/>
<evidence type="ECO:0000305" key="2"/>
<comment type="function">
    <text evidence="1">Forms part of the ribosomal stalk, playing a central role in the interaction of the ribosome with GTP-bound translation factors.</text>
</comment>
<comment type="subunit">
    <text evidence="1">Part of the ribosomal stalk of the 50S ribosomal subunit. The N-terminus interacts with L11 and the large rRNA to form the base of the stalk. The C-terminus forms an elongated spine to which L12 dimers bind in a sequential fashion forming a multimeric L10(L12)X complex (By similarity).</text>
</comment>
<comment type="similarity">
    <text evidence="2">Belongs to the universal ribosomal protein uL10 family.</text>
</comment>
<accession>Q9PI33</accession>
<accession>Q0PB37</accession>